<accession>B3EP23</accession>
<gene>
    <name evidence="1" type="primary">proS</name>
    <name type="ordered locus">Cphamn1_0849</name>
</gene>
<proteinExistence type="inferred from homology"/>
<name>SYP_CHLPB</name>
<keyword id="KW-0030">Aminoacyl-tRNA synthetase</keyword>
<keyword id="KW-0067">ATP-binding</keyword>
<keyword id="KW-0963">Cytoplasm</keyword>
<keyword id="KW-0436">Ligase</keyword>
<keyword id="KW-0547">Nucleotide-binding</keyword>
<keyword id="KW-0648">Protein biosynthesis</keyword>
<evidence type="ECO:0000255" key="1">
    <source>
        <dbReference type="HAMAP-Rule" id="MF_01571"/>
    </source>
</evidence>
<protein>
    <recommendedName>
        <fullName evidence="1">Proline--tRNA ligase</fullName>
        <ecNumber evidence="1">6.1.1.15</ecNumber>
    </recommendedName>
    <alternativeName>
        <fullName evidence="1">Prolyl-tRNA synthetase</fullName>
        <shortName evidence="1">ProRS</shortName>
    </alternativeName>
</protein>
<sequence>MADTITPREEDYSQWYIDLVRSAKLADYSDVRGCMVIRPNGYAIWEKMQAALDGMFKATGHVNAYFPLFIPESYIQKEADHIEGFAPECAVVTHGGGEELAEKLYVRPTSETVIWASYKKWIQSYRDLPLLINQWANVVRWEMRTRLFLRTSEFLWQEGHTAHATPEEAQDEVLRMINVYKTFAEEYMAMPVLIGRKTDSEKFAGADETWCIEAMMQDKKALQAGTSHNLGQNFAKAFDCQFQSKNGTLEYVWATSWGVSTRLIGALIMAHSDDRGLVLPPKLASRQVVIVPILRGDKQAVAEKAHALADELNSNGIHAFVDDSEQNSPGWKFAEYELQGIPVRLEIGPRDISSNICIAARRDTGEKQQIALDDTFAASISSLLDAIQQSMFKSALEFREANTREVSSYDEFKKCIDKGFLIAHWDGREETEAKIKEETKATIRLIPEDPDFRKKYSMDEPGICICSGNPSKGKVVFAKAY</sequence>
<feature type="chain" id="PRO_1000215552" description="Proline--tRNA ligase">
    <location>
        <begin position="1"/>
        <end position="481"/>
    </location>
</feature>
<reference key="1">
    <citation type="submission" date="2008-06" db="EMBL/GenBank/DDBJ databases">
        <title>Complete sequence of Chlorobium phaeobacteroides BS1.</title>
        <authorList>
            <consortium name="US DOE Joint Genome Institute"/>
            <person name="Lucas S."/>
            <person name="Copeland A."/>
            <person name="Lapidus A."/>
            <person name="Glavina del Rio T."/>
            <person name="Dalin E."/>
            <person name="Tice H."/>
            <person name="Bruce D."/>
            <person name="Goodwin L."/>
            <person name="Pitluck S."/>
            <person name="Schmutz J."/>
            <person name="Larimer F."/>
            <person name="Land M."/>
            <person name="Hauser L."/>
            <person name="Kyrpides N."/>
            <person name="Ovchinnikova G."/>
            <person name="Li T."/>
            <person name="Liu Z."/>
            <person name="Zhao F."/>
            <person name="Overmann J."/>
            <person name="Bryant D.A."/>
            <person name="Richardson P."/>
        </authorList>
    </citation>
    <scope>NUCLEOTIDE SEQUENCE [LARGE SCALE GENOMIC DNA]</scope>
    <source>
        <strain>BS1</strain>
    </source>
</reference>
<comment type="function">
    <text evidence="1">Catalyzes the attachment of proline to tRNA(Pro) in a two-step reaction: proline is first activated by ATP to form Pro-AMP and then transferred to the acceptor end of tRNA(Pro).</text>
</comment>
<comment type="catalytic activity">
    <reaction evidence="1">
        <text>tRNA(Pro) + L-proline + ATP = L-prolyl-tRNA(Pro) + AMP + diphosphate</text>
        <dbReference type="Rhea" id="RHEA:14305"/>
        <dbReference type="Rhea" id="RHEA-COMP:9700"/>
        <dbReference type="Rhea" id="RHEA-COMP:9702"/>
        <dbReference type="ChEBI" id="CHEBI:30616"/>
        <dbReference type="ChEBI" id="CHEBI:33019"/>
        <dbReference type="ChEBI" id="CHEBI:60039"/>
        <dbReference type="ChEBI" id="CHEBI:78442"/>
        <dbReference type="ChEBI" id="CHEBI:78532"/>
        <dbReference type="ChEBI" id="CHEBI:456215"/>
        <dbReference type="EC" id="6.1.1.15"/>
    </reaction>
</comment>
<comment type="subunit">
    <text evidence="1">Homodimer.</text>
</comment>
<comment type="subcellular location">
    <subcellularLocation>
        <location evidence="1">Cytoplasm</location>
    </subcellularLocation>
</comment>
<comment type="domain">
    <text evidence="1">Consists of three domains: the N-terminal catalytic domain, the anticodon-binding domain and the C-terminal extension.</text>
</comment>
<comment type="similarity">
    <text evidence="1">Belongs to the class-II aminoacyl-tRNA synthetase family. ProS type 3 subfamily.</text>
</comment>
<organism>
    <name type="scientific">Chlorobium phaeobacteroides (strain BS1)</name>
    <dbReference type="NCBI Taxonomy" id="331678"/>
    <lineage>
        <taxon>Bacteria</taxon>
        <taxon>Pseudomonadati</taxon>
        <taxon>Chlorobiota</taxon>
        <taxon>Chlorobiia</taxon>
        <taxon>Chlorobiales</taxon>
        <taxon>Chlorobiaceae</taxon>
        <taxon>Chlorobium/Pelodictyon group</taxon>
        <taxon>Chlorobium</taxon>
    </lineage>
</organism>
<dbReference type="EC" id="6.1.1.15" evidence="1"/>
<dbReference type="EMBL" id="CP001101">
    <property type="protein sequence ID" value="ACE03800.1"/>
    <property type="molecule type" value="Genomic_DNA"/>
</dbReference>
<dbReference type="SMR" id="B3EP23"/>
<dbReference type="STRING" id="331678.Cphamn1_0849"/>
<dbReference type="KEGG" id="cpb:Cphamn1_0849"/>
<dbReference type="eggNOG" id="COG0442">
    <property type="taxonomic scope" value="Bacteria"/>
</dbReference>
<dbReference type="HOGENOM" id="CLU_001882_4_2_10"/>
<dbReference type="OrthoDB" id="9809052at2"/>
<dbReference type="GO" id="GO:0017101">
    <property type="term" value="C:aminoacyl-tRNA synthetase multienzyme complex"/>
    <property type="evidence" value="ECO:0007669"/>
    <property type="project" value="TreeGrafter"/>
</dbReference>
<dbReference type="GO" id="GO:0005737">
    <property type="term" value="C:cytoplasm"/>
    <property type="evidence" value="ECO:0007669"/>
    <property type="project" value="UniProtKB-SubCell"/>
</dbReference>
<dbReference type="GO" id="GO:0005524">
    <property type="term" value="F:ATP binding"/>
    <property type="evidence" value="ECO:0007669"/>
    <property type="project" value="UniProtKB-UniRule"/>
</dbReference>
<dbReference type="GO" id="GO:0004827">
    <property type="term" value="F:proline-tRNA ligase activity"/>
    <property type="evidence" value="ECO:0007669"/>
    <property type="project" value="UniProtKB-UniRule"/>
</dbReference>
<dbReference type="GO" id="GO:0006433">
    <property type="term" value="P:prolyl-tRNA aminoacylation"/>
    <property type="evidence" value="ECO:0007669"/>
    <property type="project" value="UniProtKB-UniRule"/>
</dbReference>
<dbReference type="CDD" id="cd00862">
    <property type="entry name" value="ProRS_anticodon_zinc"/>
    <property type="match status" value="1"/>
</dbReference>
<dbReference type="CDD" id="cd00778">
    <property type="entry name" value="ProRS_core_arch_euk"/>
    <property type="match status" value="1"/>
</dbReference>
<dbReference type="FunFam" id="3.30.930.10:FF:000023">
    <property type="entry name" value="Proline--tRNA ligase"/>
    <property type="match status" value="1"/>
</dbReference>
<dbReference type="Gene3D" id="3.40.50.800">
    <property type="entry name" value="Anticodon-binding domain"/>
    <property type="match status" value="1"/>
</dbReference>
<dbReference type="Gene3D" id="3.30.930.10">
    <property type="entry name" value="Bira Bifunctional Protein, Domain 2"/>
    <property type="match status" value="1"/>
</dbReference>
<dbReference type="Gene3D" id="3.30.110.30">
    <property type="entry name" value="C-terminal domain of ProRS"/>
    <property type="match status" value="1"/>
</dbReference>
<dbReference type="HAMAP" id="MF_01571">
    <property type="entry name" value="Pro_tRNA_synth_type3"/>
    <property type="match status" value="1"/>
</dbReference>
<dbReference type="InterPro" id="IPR002314">
    <property type="entry name" value="aa-tRNA-synt_IIb"/>
</dbReference>
<dbReference type="InterPro" id="IPR006195">
    <property type="entry name" value="aa-tRNA-synth_II"/>
</dbReference>
<dbReference type="InterPro" id="IPR045864">
    <property type="entry name" value="aa-tRNA-synth_II/BPL/LPL"/>
</dbReference>
<dbReference type="InterPro" id="IPR004154">
    <property type="entry name" value="Anticodon-bd"/>
</dbReference>
<dbReference type="InterPro" id="IPR036621">
    <property type="entry name" value="Anticodon-bd_dom_sf"/>
</dbReference>
<dbReference type="InterPro" id="IPR002316">
    <property type="entry name" value="Pro-tRNA-ligase_IIa"/>
</dbReference>
<dbReference type="InterPro" id="IPR004499">
    <property type="entry name" value="Pro-tRNA-ligase_IIa_arc-type"/>
</dbReference>
<dbReference type="InterPro" id="IPR016061">
    <property type="entry name" value="Pro-tRNA_ligase_II_C"/>
</dbReference>
<dbReference type="InterPro" id="IPR017449">
    <property type="entry name" value="Pro-tRNA_synth_II"/>
</dbReference>
<dbReference type="InterPro" id="IPR033721">
    <property type="entry name" value="ProRS_core_arch_euk"/>
</dbReference>
<dbReference type="NCBIfam" id="TIGR00408">
    <property type="entry name" value="proS_fam_I"/>
    <property type="match status" value="1"/>
</dbReference>
<dbReference type="PANTHER" id="PTHR43382:SF2">
    <property type="entry name" value="BIFUNCTIONAL GLUTAMATE_PROLINE--TRNA LIGASE"/>
    <property type="match status" value="1"/>
</dbReference>
<dbReference type="PANTHER" id="PTHR43382">
    <property type="entry name" value="PROLYL-TRNA SYNTHETASE"/>
    <property type="match status" value="1"/>
</dbReference>
<dbReference type="Pfam" id="PF03129">
    <property type="entry name" value="HGTP_anticodon"/>
    <property type="match status" value="1"/>
</dbReference>
<dbReference type="Pfam" id="PF09180">
    <property type="entry name" value="ProRS-C_1"/>
    <property type="match status" value="1"/>
</dbReference>
<dbReference type="Pfam" id="PF00587">
    <property type="entry name" value="tRNA-synt_2b"/>
    <property type="match status" value="1"/>
</dbReference>
<dbReference type="PRINTS" id="PR01046">
    <property type="entry name" value="TRNASYNTHPRO"/>
</dbReference>
<dbReference type="SMART" id="SM00946">
    <property type="entry name" value="ProRS-C_1"/>
    <property type="match status" value="1"/>
</dbReference>
<dbReference type="SUPFAM" id="SSF64586">
    <property type="entry name" value="C-terminal domain of ProRS"/>
    <property type="match status" value="1"/>
</dbReference>
<dbReference type="SUPFAM" id="SSF52954">
    <property type="entry name" value="Class II aaRS ABD-related"/>
    <property type="match status" value="1"/>
</dbReference>
<dbReference type="SUPFAM" id="SSF55681">
    <property type="entry name" value="Class II aaRS and biotin synthetases"/>
    <property type="match status" value="1"/>
</dbReference>
<dbReference type="PROSITE" id="PS50862">
    <property type="entry name" value="AA_TRNA_LIGASE_II"/>
    <property type="match status" value="1"/>
</dbReference>